<name>REX2_ENTFA</name>
<feature type="chain" id="PRO_0000097892" description="Redox-sensing transcriptional repressor Rex 2">
    <location>
        <begin position="1"/>
        <end position="215"/>
    </location>
</feature>
<feature type="DNA-binding region" description="H-T-H motif" evidence="1">
    <location>
        <begin position="15"/>
        <end position="54"/>
    </location>
</feature>
<feature type="binding site" evidence="1">
    <location>
        <begin position="89"/>
        <end position="94"/>
    </location>
    <ligand>
        <name>NAD(+)</name>
        <dbReference type="ChEBI" id="CHEBI:57540"/>
    </ligand>
</feature>
<organism>
    <name type="scientific">Enterococcus faecalis (strain ATCC 700802 / V583)</name>
    <dbReference type="NCBI Taxonomy" id="226185"/>
    <lineage>
        <taxon>Bacteria</taxon>
        <taxon>Bacillati</taxon>
        <taxon>Bacillota</taxon>
        <taxon>Bacilli</taxon>
        <taxon>Lactobacillales</taxon>
        <taxon>Enterococcaceae</taxon>
        <taxon>Enterococcus</taxon>
    </lineage>
</organism>
<protein>
    <recommendedName>
        <fullName evidence="1">Redox-sensing transcriptional repressor Rex 2</fullName>
    </recommendedName>
</protein>
<keyword id="KW-0963">Cytoplasm</keyword>
<keyword id="KW-0238">DNA-binding</keyword>
<keyword id="KW-0520">NAD</keyword>
<keyword id="KW-1185">Reference proteome</keyword>
<keyword id="KW-0678">Repressor</keyword>
<keyword id="KW-0804">Transcription</keyword>
<keyword id="KW-0805">Transcription regulation</keyword>
<proteinExistence type="inferred from homology"/>
<sequence>MEKKMPKATAKRLPVYLRYLKMLGDSGVKRIKSREFSEMIQIPSATIRRDFSHVGELGRSGYGYDVPYLIEVFSNILNTQEEKRIALIGCGNLGKALLKNNFRRNENLNIVCAFDNDSALVGTTINGLLVHDMSELEAFVRQEGVTVAISTVPSHHAQKAIDKIVQAGVTAILNFAPDRVSVPANVSVQYIDLTTELQTLIYFNETFSLANSPKQ</sequence>
<accession>Q82ZW4</accession>
<gene>
    <name evidence="1" type="primary">rex2</name>
    <name type="ordered locus">EF_2933</name>
</gene>
<reference key="1">
    <citation type="journal article" date="2003" name="Science">
        <title>Role of mobile DNA in the evolution of vancomycin-resistant Enterococcus faecalis.</title>
        <authorList>
            <person name="Paulsen I.T."/>
            <person name="Banerjei L."/>
            <person name="Myers G.S.A."/>
            <person name="Nelson K.E."/>
            <person name="Seshadri R."/>
            <person name="Read T.D."/>
            <person name="Fouts D.E."/>
            <person name="Eisen J.A."/>
            <person name="Gill S.R."/>
            <person name="Heidelberg J.F."/>
            <person name="Tettelin H."/>
            <person name="Dodson R.J."/>
            <person name="Umayam L.A."/>
            <person name="Brinkac L.M."/>
            <person name="Beanan M.J."/>
            <person name="Daugherty S.C."/>
            <person name="DeBoy R.T."/>
            <person name="Durkin S.A."/>
            <person name="Kolonay J.F."/>
            <person name="Madupu R."/>
            <person name="Nelson W.C."/>
            <person name="Vamathevan J.J."/>
            <person name="Tran B."/>
            <person name="Upton J."/>
            <person name="Hansen T."/>
            <person name="Shetty J."/>
            <person name="Khouri H.M."/>
            <person name="Utterback T.R."/>
            <person name="Radune D."/>
            <person name="Ketchum K.A."/>
            <person name="Dougherty B.A."/>
            <person name="Fraser C.M."/>
        </authorList>
    </citation>
    <scope>NUCLEOTIDE SEQUENCE [LARGE SCALE GENOMIC DNA]</scope>
    <source>
        <strain>ATCC 700802 / V583</strain>
    </source>
</reference>
<comment type="function">
    <text evidence="1">Modulates transcription in response to changes in cellular NADH/NAD(+) redox state.</text>
</comment>
<comment type="subunit">
    <text evidence="1">Homodimer.</text>
</comment>
<comment type="subcellular location">
    <subcellularLocation>
        <location evidence="1">Cytoplasm</location>
    </subcellularLocation>
</comment>
<comment type="similarity">
    <text evidence="1">Belongs to the transcriptional regulatory Rex family.</text>
</comment>
<evidence type="ECO:0000255" key="1">
    <source>
        <dbReference type="HAMAP-Rule" id="MF_01131"/>
    </source>
</evidence>
<dbReference type="EMBL" id="AE016830">
    <property type="protein sequence ID" value="AAO82621.1"/>
    <property type="molecule type" value="Genomic_DNA"/>
</dbReference>
<dbReference type="RefSeq" id="NP_816551.1">
    <property type="nucleotide sequence ID" value="NC_004668.1"/>
</dbReference>
<dbReference type="RefSeq" id="WP_002365189.1">
    <property type="nucleotide sequence ID" value="NZ_KE136524.1"/>
</dbReference>
<dbReference type="SMR" id="Q82ZW4"/>
<dbReference type="STRING" id="226185.EF_2933"/>
<dbReference type="EnsemblBacteria" id="AAO82621">
    <property type="protein sequence ID" value="AAO82621"/>
    <property type="gene ID" value="EF_2933"/>
</dbReference>
<dbReference type="KEGG" id="efa:EF2933"/>
<dbReference type="PATRIC" id="fig|226185.45.peg.642"/>
<dbReference type="eggNOG" id="COG2344">
    <property type="taxonomic scope" value="Bacteria"/>
</dbReference>
<dbReference type="HOGENOM" id="CLU_061534_1_1_9"/>
<dbReference type="Proteomes" id="UP000001415">
    <property type="component" value="Chromosome"/>
</dbReference>
<dbReference type="GO" id="GO:0005737">
    <property type="term" value="C:cytoplasm"/>
    <property type="evidence" value="ECO:0007669"/>
    <property type="project" value="UniProtKB-SubCell"/>
</dbReference>
<dbReference type="GO" id="GO:0003677">
    <property type="term" value="F:DNA binding"/>
    <property type="evidence" value="ECO:0007669"/>
    <property type="project" value="UniProtKB-UniRule"/>
</dbReference>
<dbReference type="GO" id="GO:0003700">
    <property type="term" value="F:DNA-binding transcription factor activity"/>
    <property type="evidence" value="ECO:0007669"/>
    <property type="project" value="UniProtKB-UniRule"/>
</dbReference>
<dbReference type="GO" id="GO:0045892">
    <property type="term" value="P:negative regulation of DNA-templated transcription"/>
    <property type="evidence" value="ECO:0007669"/>
    <property type="project" value="InterPro"/>
</dbReference>
<dbReference type="GO" id="GO:0051775">
    <property type="term" value="P:response to redox state"/>
    <property type="evidence" value="ECO:0007669"/>
    <property type="project" value="InterPro"/>
</dbReference>
<dbReference type="Gene3D" id="3.40.50.720">
    <property type="entry name" value="NAD(P)-binding Rossmann-like Domain"/>
    <property type="match status" value="1"/>
</dbReference>
<dbReference type="Gene3D" id="1.10.10.10">
    <property type="entry name" value="Winged helix-like DNA-binding domain superfamily/Winged helix DNA-binding domain"/>
    <property type="match status" value="1"/>
</dbReference>
<dbReference type="HAMAP" id="MF_01131">
    <property type="entry name" value="Rex"/>
    <property type="match status" value="1"/>
</dbReference>
<dbReference type="InterPro" id="IPR003781">
    <property type="entry name" value="CoA-bd"/>
</dbReference>
<dbReference type="InterPro" id="IPR036291">
    <property type="entry name" value="NAD(P)-bd_dom_sf"/>
</dbReference>
<dbReference type="InterPro" id="IPR009718">
    <property type="entry name" value="Rex_DNA-bd_C_dom"/>
</dbReference>
<dbReference type="InterPro" id="IPR022876">
    <property type="entry name" value="Tscrpt_rep_Rex"/>
</dbReference>
<dbReference type="InterPro" id="IPR036388">
    <property type="entry name" value="WH-like_DNA-bd_sf"/>
</dbReference>
<dbReference type="InterPro" id="IPR036390">
    <property type="entry name" value="WH_DNA-bd_sf"/>
</dbReference>
<dbReference type="NCBIfam" id="NF003989">
    <property type="entry name" value="PRK05472.1-3"/>
    <property type="match status" value="1"/>
</dbReference>
<dbReference type="NCBIfam" id="NF003991">
    <property type="entry name" value="PRK05472.1-5"/>
    <property type="match status" value="1"/>
</dbReference>
<dbReference type="NCBIfam" id="NF003994">
    <property type="entry name" value="PRK05472.2-3"/>
    <property type="match status" value="1"/>
</dbReference>
<dbReference type="NCBIfam" id="NF003995">
    <property type="entry name" value="PRK05472.2-4"/>
    <property type="match status" value="1"/>
</dbReference>
<dbReference type="NCBIfam" id="NF003996">
    <property type="entry name" value="PRK05472.2-5"/>
    <property type="match status" value="1"/>
</dbReference>
<dbReference type="PANTHER" id="PTHR35786">
    <property type="entry name" value="REDOX-SENSING TRANSCRIPTIONAL REPRESSOR REX"/>
    <property type="match status" value="1"/>
</dbReference>
<dbReference type="PANTHER" id="PTHR35786:SF1">
    <property type="entry name" value="REDOX-SENSING TRANSCRIPTIONAL REPRESSOR REX 1"/>
    <property type="match status" value="1"/>
</dbReference>
<dbReference type="Pfam" id="PF02629">
    <property type="entry name" value="CoA_binding"/>
    <property type="match status" value="1"/>
</dbReference>
<dbReference type="Pfam" id="PF06971">
    <property type="entry name" value="Put_DNA-bind_N"/>
    <property type="match status" value="1"/>
</dbReference>
<dbReference type="SMART" id="SM00881">
    <property type="entry name" value="CoA_binding"/>
    <property type="match status" value="1"/>
</dbReference>
<dbReference type="SUPFAM" id="SSF51735">
    <property type="entry name" value="NAD(P)-binding Rossmann-fold domains"/>
    <property type="match status" value="1"/>
</dbReference>
<dbReference type="SUPFAM" id="SSF46785">
    <property type="entry name" value="Winged helix' DNA-binding domain"/>
    <property type="match status" value="1"/>
</dbReference>